<name>PGK_BEUC1</name>
<reference key="1">
    <citation type="journal article" date="2009" name="Stand. Genomic Sci.">
        <title>Complete genome sequence of Beutenbergia cavernae type strain (HKI 0122).</title>
        <authorList>
            <person name="Land M."/>
            <person name="Pukall R."/>
            <person name="Abt B."/>
            <person name="Goker M."/>
            <person name="Rohde M."/>
            <person name="Glavina Del Rio T."/>
            <person name="Tice H."/>
            <person name="Copeland A."/>
            <person name="Cheng J.F."/>
            <person name="Lucas S."/>
            <person name="Chen F."/>
            <person name="Nolan M."/>
            <person name="Bruce D."/>
            <person name="Goodwin L."/>
            <person name="Pitluck S."/>
            <person name="Ivanova N."/>
            <person name="Mavromatis K."/>
            <person name="Ovchinnikova G."/>
            <person name="Pati A."/>
            <person name="Chen A."/>
            <person name="Palaniappan K."/>
            <person name="Hauser L."/>
            <person name="Chang Y.J."/>
            <person name="Jefferies C.C."/>
            <person name="Saunders E."/>
            <person name="Brettin T."/>
            <person name="Detter J.C."/>
            <person name="Han C."/>
            <person name="Chain P."/>
            <person name="Bristow J."/>
            <person name="Eisen J.A."/>
            <person name="Markowitz V."/>
            <person name="Hugenholtz P."/>
            <person name="Kyrpides N.C."/>
            <person name="Klenk H.P."/>
            <person name="Lapidus A."/>
        </authorList>
    </citation>
    <scope>NUCLEOTIDE SEQUENCE [LARGE SCALE GENOMIC DNA]</scope>
    <source>
        <strain>ATCC BAA-8 / DSM 12333 / CCUG 43141 / JCM 11478 / NBRC 16432 / NCIMB 13614 / HKI 0122</strain>
    </source>
</reference>
<protein>
    <recommendedName>
        <fullName evidence="1">Phosphoglycerate kinase</fullName>
        <ecNumber evidence="1">2.7.2.3</ecNumber>
    </recommendedName>
</protein>
<comment type="catalytic activity">
    <reaction evidence="1">
        <text>(2R)-3-phosphoglycerate + ATP = (2R)-3-phospho-glyceroyl phosphate + ADP</text>
        <dbReference type="Rhea" id="RHEA:14801"/>
        <dbReference type="ChEBI" id="CHEBI:30616"/>
        <dbReference type="ChEBI" id="CHEBI:57604"/>
        <dbReference type="ChEBI" id="CHEBI:58272"/>
        <dbReference type="ChEBI" id="CHEBI:456216"/>
        <dbReference type="EC" id="2.7.2.3"/>
    </reaction>
</comment>
<comment type="pathway">
    <text evidence="1">Carbohydrate degradation; glycolysis; pyruvate from D-glyceraldehyde 3-phosphate: step 2/5.</text>
</comment>
<comment type="subunit">
    <text evidence="1">Monomer.</text>
</comment>
<comment type="subcellular location">
    <subcellularLocation>
        <location evidence="1">Cytoplasm</location>
    </subcellularLocation>
</comment>
<comment type="similarity">
    <text evidence="1">Belongs to the phosphoglycerate kinase family.</text>
</comment>
<dbReference type="EC" id="2.7.2.3" evidence="1"/>
<dbReference type="EMBL" id="CP001618">
    <property type="protein sequence ID" value="ACQ80422.1"/>
    <property type="molecule type" value="Genomic_DNA"/>
</dbReference>
<dbReference type="RefSeq" id="WP_015882662.1">
    <property type="nucleotide sequence ID" value="NC_012669.1"/>
</dbReference>
<dbReference type="SMR" id="C5BV35"/>
<dbReference type="STRING" id="471853.Bcav_2170"/>
<dbReference type="KEGG" id="bcv:Bcav_2170"/>
<dbReference type="eggNOG" id="COG0126">
    <property type="taxonomic scope" value="Bacteria"/>
</dbReference>
<dbReference type="HOGENOM" id="CLU_025427_0_2_11"/>
<dbReference type="OrthoDB" id="9808460at2"/>
<dbReference type="UniPathway" id="UPA00109">
    <property type="reaction ID" value="UER00185"/>
</dbReference>
<dbReference type="Proteomes" id="UP000007962">
    <property type="component" value="Chromosome"/>
</dbReference>
<dbReference type="GO" id="GO:0005829">
    <property type="term" value="C:cytosol"/>
    <property type="evidence" value="ECO:0007669"/>
    <property type="project" value="TreeGrafter"/>
</dbReference>
<dbReference type="GO" id="GO:0043531">
    <property type="term" value="F:ADP binding"/>
    <property type="evidence" value="ECO:0007669"/>
    <property type="project" value="TreeGrafter"/>
</dbReference>
<dbReference type="GO" id="GO:0005524">
    <property type="term" value="F:ATP binding"/>
    <property type="evidence" value="ECO:0007669"/>
    <property type="project" value="UniProtKB-KW"/>
</dbReference>
<dbReference type="GO" id="GO:0004618">
    <property type="term" value="F:phosphoglycerate kinase activity"/>
    <property type="evidence" value="ECO:0007669"/>
    <property type="project" value="UniProtKB-UniRule"/>
</dbReference>
<dbReference type="GO" id="GO:0006094">
    <property type="term" value="P:gluconeogenesis"/>
    <property type="evidence" value="ECO:0007669"/>
    <property type="project" value="TreeGrafter"/>
</dbReference>
<dbReference type="GO" id="GO:0006096">
    <property type="term" value="P:glycolytic process"/>
    <property type="evidence" value="ECO:0007669"/>
    <property type="project" value="UniProtKB-UniRule"/>
</dbReference>
<dbReference type="CDD" id="cd00318">
    <property type="entry name" value="Phosphoglycerate_kinase"/>
    <property type="match status" value="1"/>
</dbReference>
<dbReference type="FunFam" id="3.40.50.1260:FF:000003">
    <property type="entry name" value="Phosphoglycerate kinase"/>
    <property type="match status" value="1"/>
</dbReference>
<dbReference type="FunFam" id="3.40.50.1260:FF:000006">
    <property type="entry name" value="Phosphoglycerate kinase"/>
    <property type="match status" value="1"/>
</dbReference>
<dbReference type="Gene3D" id="3.40.50.1260">
    <property type="entry name" value="Phosphoglycerate kinase, N-terminal domain"/>
    <property type="match status" value="2"/>
</dbReference>
<dbReference type="HAMAP" id="MF_00145">
    <property type="entry name" value="Phosphoglyc_kinase"/>
    <property type="match status" value="1"/>
</dbReference>
<dbReference type="InterPro" id="IPR001576">
    <property type="entry name" value="Phosphoglycerate_kinase"/>
</dbReference>
<dbReference type="InterPro" id="IPR015911">
    <property type="entry name" value="Phosphoglycerate_kinase_CS"/>
</dbReference>
<dbReference type="InterPro" id="IPR015824">
    <property type="entry name" value="Phosphoglycerate_kinase_N"/>
</dbReference>
<dbReference type="InterPro" id="IPR036043">
    <property type="entry name" value="Phosphoglycerate_kinase_sf"/>
</dbReference>
<dbReference type="PANTHER" id="PTHR11406">
    <property type="entry name" value="PHOSPHOGLYCERATE KINASE"/>
    <property type="match status" value="1"/>
</dbReference>
<dbReference type="PANTHER" id="PTHR11406:SF23">
    <property type="entry name" value="PHOSPHOGLYCERATE KINASE 1, CHLOROPLASTIC-RELATED"/>
    <property type="match status" value="1"/>
</dbReference>
<dbReference type="Pfam" id="PF00162">
    <property type="entry name" value="PGK"/>
    <property type="match status" value="1"/>
</dbReference>
<dbReference type="PIRSF" id="PIRSF000724">
    <property type="entry name" value="Pgk"/>
    <property type="match status" value="1"/>
</dbReference>
<dbReference type="PRINTS" id="PR00477">
    <property type="entry name" value="PHGLYCKINASE"/>
</dbReference>
<dbReference type="SUPFAM" id="SSF53748">
    <property type="entry name" value="Phosphoglycerate kinase"/>
    <property type="match status" value="1"/>
</dbReference>
<dbReference type="PROSITE" id="PS00111">
    <property type="entry name" value="PGLYCERATE_KINASE"/>
    <property type="match status" value="1"/>
</dbReference>
<proteinExistence type="inferred from homology"/>
<gene>
    <name evidence="1" type="primary">pgk</name>
    <name type="ordered locus">Bcav_2170</name>
</gene>
<keyword id="KW-0067">ATP-binding</keyword>
<keyword id="KW-0963">Cytoplasm</keyword>
<keyword id="KW-0324">Glycolysis</keyword>
<keyword id="KW-0418">Kinase</keyword>
<keyword id="KW-0547">Nucleotide-binding</keyword>
<keyword id="KW-1185">Reference proteome</keyword>
<keyword id="KW-0808">Transferase</keyword>
<sequence length="399" mass="40893">MRTIDDLGELRGKTVLVRSDFNVPLDGTTITDDGRIRAALPTLKRLVDAGAKVVVTAHLGRPKGAPDPAFSLAPVAQRLGALLGTPVALAADVVGPSAHETVAALSDGDVALLENVRFDPRESSKDDAERLELARAFAELADAFVSDGFGVVHRKQASVYDVATLLPHAAGDLVLAEVTALRKATDDPERPYAVVLGGSKVSDKLGVIANLLTKADTLLIGGGMVFTFLAAQGHQVGKSLLEEDQIDTVKGYLDQAEQSGVTIVLPTDIVAAEAFAADAPHQVVAADAIPADSIGLDIGPESGEAFAAVIRGAKTVVWNGPMGVFEFDAFAAGTRAVAQGLTDATAAGAFTIVGGGDSAAAVRSLGFDEAGFSHISTGGGASLEFLEGKTLPGLAVLED</sequence>
<accession>C5BV35</accession>
<feature type="chain" id="PRO_1000203320" description="Phosphoglycerate kinase">
    <location>
        <begin position="1"/>
        <end position="399"/>
    </location>
</feature>
<feature type="binding site" evidence="1">
    <location>
        <begin position="20"/>
        <end position="22"/>
    </location>
    <ligand>
        <name>substrate</name>
    </ligand>
</feature>
<feature type="binding site" evidence="1">
    <location>
        <position position="35"/>
    </location>
    <ligand>
        <name>substrate</name>
    </ligand>
</feature>
<feature type="binding site" evidence="1">
    <location>
        <begin position="58"/>
        <end position="61"/>
    </location>
    <ligand>
        <name>substrate</name>
    </ligand>
</feature>
<feature type="binding site" evidence="1">
    <location>
        <position position="117"/>
    </location>
    <ligand>
        <name>substrate</name>
    </ligand>
</feature>
<feature type="binding site" evidence="1">
    <location>
        <position position="154"/>
    </location>
    <ligand>
        <name>substrate</name>
    </ligand>
</feature>
<feature type="binding site" evidence="1">
    <location>
        <position position="204"/>
    </location>
    <ligand>
        <name>ATP</name>
        <dbReference type="ChEBI" id="CHEBI:30616"/>
    </ligand>
</feature>
<feature type="binding site" evidence="1">
    <location>
        <position position="295"/>
    </location>
    <ligand>
        <name>ATP</name>
        <dbReference type="ChEBI" id="CHEBI:30616"/>
    </ligand>
</feature>
<feature type="binding site" evidence="1">
    <location>
        <position position="326"/>
    </location>
    <ligand>
        <name>ATP</name>
        <dbReference type="ChEBI" id="CHEBI:30616"/>
    </ligand>
</feature>
<feature type="binding site" evidence="1">
    <location>
        <begin position="355"/>
        <end position="358"/>
    </location>
    <ligand>
        <name>ATP</name>
        <dbReference type="ChEBI" id="CHEBI:30616"/>
    </ligand>
</feature>
<evidence type="ECO:0000255" key="1">
    <source>
        <dbReference type="HAMAP-Rule" id="MF_00145"/>
    </source>
</evidence>
<organism>
    <name type="scientific">Beutenbergia cavernae (strain ATCC BAA-8 / DSM 12333 / CCUG 43141 / JCM 11478 / NBRC 16432 / NCIMB 13614 / HKI 0122)</name>
    <dbReference type="NCBI Taxonomy" id="471853"/>
    <lineage>
        <taxon>Bacteria</taxon>
        <taxon>Bacillati</taxon>
        <taxon>Actinomycetota</taxon>
        <taxon>Actinomycetes</taxon>
        <taxon>Micrococcales</taxon>
        <taxon>Beutenbergiaceae</taxon>
        <taxon>Beutenbergia</taxon>
    </lineage>
</organism>